<dbReference type="EMBL" id="CP000570">
    <property type="protein sequence ID" value="ABN84904.1"/>
    <property type="molecule type" value="Genomic_DNA"/>
</dbReference>
<dbReference type="RefSeq" id="WP_004199274.1">
    <property type="nucleotide sequence ID" value="NC_009074.1"/>
</dbReference>
<dbReference type="SMR" id="A3NEH6"/>
<dbReference type="GeneID" id="93061829"/>
<dbReference type="KEGG" id="bpd:BURPS668_3743"/>
<dbReference type="HOGENOM" id="CLU_036235_2_1_4"/>
<dbReference type="GO" id="GO:0015934">
    <property type="term" value="C:large ribosomal subunit"/>
    <property type="evidence" value="ECO:0007669"/>
    <property type="project" value="InterPro"/>
</dbReference>
<dbReference type="GO" id="GO:0019843">
    <property type="term" value="F:rRNA binding"/>
    <property type="evidence" value="ECO:0007669"/>
    <property type="project" value="UniProtKB-UniRule"/>
</dbReference>
<dbReference type="GO" id="GO:0003735">
    <property type="term" value="F:structural constituent of ribosome"/>
    <property type="evidence" value="ECO:0007669"/>
    <property type="project" value="InterPro"/>
</dbReference>
<dbReference type="GO" id="GO:0016740">
    <property type="term" value="F:transferase activity"/>
    <property type="evidence" value="ECO:0007669"/>
    <property type="project" value="InterPro"/>
</dbReference>
<dbReference type="GO" id="GO:0002181">
    <property type="term" value="P:cytoplasmic translation"/>
    <property type="evidence" value="ECO:0007669"/>
    <property type="project" value="TreeGrafter"/>
</dbReference>
<dbReference type="FunFam" id="2.30.30.30:FF:000001">
    <property type="entry name" value="50S ribosomal protein L2"/>
    <property type="match status" value="1"/>
</dbReference>
<dbReference type="FunFam" id="2.40.50.140:FF:000003">
    <property type="entry name" value="50S ribosomal protein L2"/>
    <property type="match status" value="1"/>
</dbReference>
<dbReference type="FunFam" id="4.10.950.10:FF:000001">
    <property type="entry name" value="50S ribosomal protein L2"/>
    <property type="match status" value="1"/>
</dbReference>
<dbReference type="Gene3D" id="2.30.30.30">
    <property type="match status" value="1"/>
</dbReference>
<dbReference type="Gene3D" id="2.40.50.140">
    <property type="entry name" value="Nucleic acid-binding proteins"/>
    <property type="match status" value="1"/>
</dbReference>
<dbReference type="Gene3D" id="4.10.950.10">
    <property type="entry name" value="Ribosomal protein L2, domain 3"/>
    <property type="match status" value="1"/>
</dbReference>
<dbReference type="HAMAP" id="MF_01320_B">
    <property type="entry name" value="Ribosomal_uL2_B"/>
    <property type="match status" value="1"/>
</dbReference>
<dbReference type="InterPro" id="IPR012340">
    <property type="entry name" value="NA-bd_OB-fold"/>
</dbReference>
<dbReference type="InterPro" id="IPR014722">
    <property type="entry name" value="Rib_uL2_dom2"/>
</dbReference>
<dbReference type="InterPro" id="IPR002171">
    <property type="entry name" value="Ribosomal_uL2"/>
</dbReference>
<dbReference type="InterPro" id="IPR005880">
    <property type="entry name" value="Ribosomal_uL2_bac/org-type"/>
</dbReference>
<dbReference type="InterPro" id="IPR022669">
    <property type="entry name" value="Ribosomal_uL2_C"/>
</dbReference>
<dbReference type="InterPro" id="IPR022671">
    <property type="entry name" value="Ribosomal_uL2_CS"/>
</dbReference>
<dbReference type="InterPro" id="IPR014726">
    <property type="entry name" value="Ribosomal_uL2_dom3"/>
</dbReference>
<dbReference type="InterPro" id="IPR022666">
    <property type="entry name" value="Ribosomal_uL2_RNA-bd_dom"/>
</dbReference>
<dbReference type="InterPro" id="IPR008991">
    <property type="entry name" value="Translation_prot_SH3-like_sf"/>
</dbReference>
<dbReference type="NCBIfam" id="TIGR01171">
    <property type="entry name" value="rplB_bact"/>
    <property type="match status" value="1"/>
</dbReference>
<dbReference type="PANTHER" id="PTHR13691:SF5">
    <property type="entry name" value="LARGE RIBOSOMAL SUBUNIT PROTEIN UL2M"/>
    <property type="match status" value="1"/>
</dbReference>
<dbReference type="PANTHER" id="PTHR13691">
    <property type="entry name" value="RIBOSOMAL PROTEIN L2"/>
    <property type="match status" value="1"/>
</dbReference>
<dbReference type="Pfam" id="PF00181">
    <property type="entry name" value="Ribosomal_L2"/>
    <property type="match status" value="1"/>
</dbReference>
<dbReference type="Pfam" id="PF03947">
    <property type="entry name" value="Ribosomal_L2_C"/>
    <property type="match status" value="1"/>
</dbReference>
<dbReference type="PIRSF" id="PIRSF002158">
    <property type="entry name" value="Ribosomal_L2"/>
    <property type="match status" value="1"/>
</dbReference>
<dbReference type="SMART" id="SM01383">
    <property type="entry name" value="Ribosomal_L2"/>
    <property type="match status" value="1"/>
</dbReference>
<dbReference type="SMART" id="SM01382">
    <property type="entry name" value="Ribosomal_L2_C"/>
    <property type="match status" value="1"/>
</dbReference>
<dbReference type="SUPFAM" id="SSF50249">
    <property type="entry name" value="Nucleic acid-binding proteins"/>
    <property type="match status" value="1"/>
</dbReference>
<dbReference type="SUPFAM" id="SSF50104">
    <property type="entry name" value="Translation proteins SH3-like domain"/>
    <property type="match status" value="1"/>
</dbReference>
<dbReference type="PROSITE" id="PS00467">
    <property type="entry name" value="RIBOSOMAL_L2"/>
    <property type="match status" value="1"/>
</dbReference>
<name>RL2_BURP6</name>
<keyword id="KW-0687">Ribonucleoprotein</keyword>
<keyword id="KW-0689">Ribosomal protein</keyword>
<keyword id="KW-0694">RNA-binding</keyword>
<keyword id="KW-0699">rRNA-binding</keyword>
<evidence type="ECO:0000255" key="1">
    <source>
        <dbReference type="HAMAP-Rule" id="MF_01320"/>
    </source>
</evidence>
<evidence type="ECO:0000256" key="2">
    <source>
        <dbReference type="SAM" id="MobiDB-lite"/>
    </source>
</evidence>
<evidence type="ECO:0000305" key="3"/>
<reference key="1">
    <citation type="journal article" date="2010" name="Genome Biol. Evol.">
        <title>Continuing evolution of Burkholderia mallei through genome reduction and large-scale rearrangements.</title>
        <authorList>
            <person name="Losada L."/>
            <person name="Ronning C.M."/>
            <person name="DeShazer D."/>
            <person name="Woods D."/>
            <person name="Fedorova N."/>
            <person name="Kim H.S."/>
            <person name="Shabalina S.A."/>
            <person name="Pearson T.R."/>
            <person name="Brinkac L."/>
            <person name="Tan P."/>
            <person name="Nandi T."/>
            <person name="Crabtree J."/>
            <person name="Badger J."/>
            <person name="Beckstrom-Sternberg S."/>
            <person name="Saqib M."/>
            <person name="Schutzer S.E."/>
            <person name="Keim P."/>
            <person name="Nierman W.C."/>
        </authorList>
    </citation>
    <scope>NUCLEOTIDE SEQUENCE [LARGE SCALE GENOMIC DNA]</scope>
    <source>
        <strain>668</strain>
    </source>
</reference>
<organism>
    <name type="scientific">Burkholderia pseudomallei (strain 668)</name>
    <dbReference type="NCBI Taxonomy" id="320373"/>
    <lineage>
        <taxon>Bacteria</taxon>
        <taxon>Pseudomonadati</taxon>
        <taxon>Pseudomonadota</taxon>
        <taxon>Betaproteobacteria</taxon>
        <taxon>Burkholderiales</taxon>
        <taxon>Burkholderiaceae</taxon>
        <taxon>Burkholderia</taxon>
        <taxon>pseudomallei group</taxon>
    </lineage>
</organism>
<protein>
    <recommendedName>
        <fullName evidence="1">Large ribosomal subunit protein uL2</fullName>
    </recommendedName>
    <alternativeName>
        <fullName evidence="3">50S ribosomal protein L2</fullName>
    </alternativeName>
</protein>
<feature type="chain" id="PRO_0000309887" description="Large ribosomal subunit protein uL2">
    <location>
        <begin position="1"/>
        <end position="275"/>
    </location>
</feature>
<feature type="region of interest" description="Disordered" evidence="2">
    <location>
        <begin position="38"/>
        <end position="60"/>
    </location>
</feature>
<feature type="region of interest" description="Disordered" evidence="2">
    <location>
        <begin position="224"/>
        <end position="257"/>
    </location>
</feature>
<feature type="compositionally biased region" description="Polar residues" evidence="2">
    <location>
        <begin position="38"/>
        <end position="53"/>
    </location>
</feature>
<sequence length="275" mass="30258">MAIVKVKPTSPGRRAMVKVVNKDLHKGKPHAALLDTQSSKAGRNNNGRITTRHQGGGHKQHYRVIDFRRTKDGIPAKVERLEYDPNRSANIALVLYADGERRYIIAPKGVTVGQQLMSGSEAPIRAGNTLPIRNIPVGTTIHCIEMLPGKGAQMARSAGTSAMLLAREGLYAQVRLRSGEIRRVHIECRATIGEVGNEEHSLRQIGKAGANRWRGIRPTVRGVAMNPIDHPHGGGEGRTAAGRDPVSPWGTPTKGFRTRRNKRTTTMIVQRRHKR</sequence>
<proteinExistence type="inferred from homology"/>
<gene>
    <name evidence="1" type="primary">rplB</name>
    <name type="ordered locus">BURPS668_3743</name>
</gene>
<comment type="function">
    <text evidence="1">One of the primary rRNA binding proteins. Required for association of the 30S and 50S subunits to form the 70S ribosome, for tRNA binding and peptide bond formation. It has been suggested to have peptidyltransferase activity; this is somewhat controversial. Makes several contacts with the 16S rRNA in the 70S ribosome.</text>
</comment>
<comment type="subunit">
    <text evidence="1">Part of the 50S ribosomal subunit. Forms a bridge to the 30S subunit in the 70S ribosome.</text>
</comment>
<comment type="similarity">
    <text evidence="1">Belongs to the universal ribosomal protein uL2 family.</text>
</comment>
<accession>A3NEH6</accession>